<protein>
    <recommendedName>
        <fullName>Putative phagocytic receptor 1c</fullName>
    </recommendedName>
</protein>
<comment type="subcellular location">
    <subcellularLocation>
        <location evidence="3">Membrane</location>
        <topology evidence="3">Multi-pass membrane protein</topology>
    </subcellularLocation>
</comment>
<comment type="similarity">
    <text evidence="3">Belongs to the nonaspanin (TM9SF) (TC 9.A.2) family.</text>
</comment>
<dbReference type="EMBL" id="AJ507829">
    <property type="protein sequence ID" value="CAD47841.1"/>
    <property type="molecule type" value="mRNA"/>
</dbReference>
<dbReference type="EMBL" id="AAFI02000158">
    <property type="protein sequence ID" value="EAL62351.1"/>
    <property type="molecule type" value="Genomic_DNA"/>
</dbReference>
<dbReference type="RefSeq" id="XP_635866.1">
    <property type="nucleotide sequence ID" value="XM_630774.1"/>
</dbReference>
<dbReference type="FunCoup" id="Q7YTA6">
    <property type="interactions" value="481"/>
</dbReference>
<dbReference type="STRING" id="44689.Q7YTA6"/>
<dbReference type="PaxDb" id="44689-DDB0191522"/>
<dbReference type="EnsemblProtists" id="EAL62351">
    <property type="protein sequence ID" value="EAL62351"/>
    <property type="gene ID" value="DDB_G0290159"/>
</dbReference>
<dbReference type="GeneID" id="8627522"/>
<dbReference type="KEGG" id="ddi:DDB_G0290159"/>
<dbReference type="dictyBase" id="DDB_G0290159">
    <property type="gene designation" value="phg1c"/>
</dbReference>
<dbReference type="VEuPathDB" id="AmoebaDB:DDB_G0290159"/>
<dbReference type="eggNOG" id="KOG1278">
    <property type="taxonomic scope" value="Eukaryota"/>
</dbReference>
<dbReference type="HOGENOM" id="CLU_010714_4_1_1"/>
<dbReference type="InParanoid" id="Q7YTA6"/>
<dbReference type="OMA" id="WKSIYAD"/>
<dbReference type="PhylomeDB" id="Q7YTA6"/>
<dbReference type="PRO" id="PR:Q7YTA6"/>
<dbReference type="Proteomes" id="UP000002195">
    <property type="component" value="Chromosome 5"/>
</dbReference>
<dbReference type="GO" id="GO:0016020">
    <property type="term" value="C:membrane"/>
    <property type="evidence" value="ECO:0000318"/>
    <property type="project" value="GO_Central"/>
</dbReference>
<dbReference type="GO" id="GO:0005886">
    <property type="term" value="C:plasma membrane"/>
    <property type="evidence" value="ECO:0000304"/>
    <property type="project" value="dictyBase"/>
</dbReference>
<dbReference type="GO" id="GO:0004888">
    <property type="term" value="F:transmembrane signaling receptor activity"/>
    <property type="evidence" value="ECO:0000304"/>
    <property type="project" value="dictyBase"/>
</dbReference>
<dbReference type="GO" id="GO:0006909">
    <property type="term" value="P:phagocytosis"/>
    <property type="evidence" value="ECO:0000304"/>
    <property type="project" value="dictyBase"/>
</dbReference>
<dbReference type="GO" id="GO:0072657">
    <property type="term" value="P:protein localization to membrane"/>
    <property type="evidence" value="ECO:0000318"/>
    <property type="project" value="GO_Central"/>
</dbReference>
<dbReference type="InterPro" id="IPR004240">
    <property type="entry name" value="EMP70"/>
</dbReference>
<dbReference type="PANTHER" id="PTHR10766:SF35">
    <property type="entry name" value="PHAGOCYTIC RECEPTOR 1C-RELATED"/>
    <property type="match status" value="1"/>
</dbReference>
<dbReference type="PANTHER" id="PTHR10766">
    <property type="entry name" value="TRANSMEMBRANE 9 SUPERFAMILY PROTEIN"/>
    <property type="match status" value="1"/>
</dbReference>
<dbReference type="Pfam" id="PF02990">
    <property type="entry name" value="EMP70"/>
    <property type="match status" value="1"/>
</dbReference>
<organism>
    <name type="scientific">Dictyostelium discoideum</name>
    <name type="common">Social amoeba</name>
    <dbReference type="NCBI Taxonomy" id="44689"/>
    <lineage>
        <taxon>Eukaryota</taxon>
        <taxon>Amoebozoa</taxon>
        <taxon>Evosea</taxon>
        <taxon>Eumycetozoa</taxon>
        <taxon>Dictyostelia</taxon>
        <taxon>Dictyosteliales</taxon>
        <taxon>Dictyosteliaceae</taxon>
        <taxon>Dictyostelium</taxon>
    </lineage>
</organism>
<proteinExistence type="evidence at transcript level"/>
<sequence length="655" mass="74852">MLNIIVVLLLLFFSNNVIDSRYISYSKPNYYKTNDKIPVYMNNVRSGLSIFDYYKYPFPKPSTIEYKQSFMSKLAGDLNSTSLYDEVSLHTSVDCIALGKPINYTLDDVNQLKYLIDKHFRINFFIDDLPIGELFKNNRLVEYNNSNSKSSEITSPPSSPSSSSSSSSSPSSSIEEEDDDDTENDHIYLGHPIGFKYNSKYYLYNHLIIIINSTSTKSDKGFYTIKSVNVEPYSCVDCKIDSGIGGVEISPELFDDDKIKQLTIQYTYSIRNHETTTTNSGKSFQSWSIYYVNQFKLSNIDIIMSFIIVLAVSACLAIILLKIFRKTNSKTYTQLSPDDGGWKSIYADVFRSPNNFMTFSIIIGFGVQIVASLFILMVFSVAGLTSIATPGGMAIASILIFSFTGIFNGYSSMRTYIMLGGTRKLYNSVITTTLIPFTILLLMFIGYFQVWSNKFTYGASIGTVFFILAMWLLVCVPCSLLSSYFVRTWPPAEYPVRINPIPRFIPTAKWYQNQYLHMILGGIIPFVIIFTDLSFFLSSWVLGEHYSYSLSFALTFILMIISIVETNMIIEYYQLSLENYNWWWRSLLGPMVTGLYTFIYFIYFGITRIETEGVGFYYFMFSLVFSILVSLFCSSIGFLGNLWFTKKIYSTLHFD</sequence>
<gene>
    <name type="primary">phg1c</name>
    <name type="ORF">DDB_G0290159</name>
</gene>
<name>PHG1C_DICDI</name>
<feature type="signal peptide" evidence="1">
    <location>
        <begin position="1"/>
        <end position="20"/>
    </location>
</feature>
<feature type="chain" id="PRO_5000068834" description="Putative phagocytic receptor 1c">
    <location>
        <begin position="21"/>
        <end position="655"/>
    </location>
</feature>
<feature type="transmembrane region" description="Helical" evidence="1">
    <location>
        <begin position="300"/>
        <end position="320"/>
    </location>
</feature>
<feature type="transmembrane region" description="Helical" evidence="1">
    <location>
        <begin position="359"/>
        <end position="379"/>
    </location>
</feature>
<feature type="transmembrane region" description="Helical" evidence="1">
    <location>
        <begin position="387"/>
        <end position="407"/>
    </location>
</feature>
<feature type="transmembrane region" description="Helical" evidence="1">
    <location>
        <begin position="428"/>
        <end position="448"/>
    </location>
</feature>
<feature type="transmembrane region" description="Helical" evidence="1">
    <location>
        <begin position="461"/>
        <end position="481"/>
    </location>
</feature>
<feature type="transmembrane region" description="Helical" evidence="1">
    <location>
        <begin position="518"/>
        <end position="538"/>
    </location>
</feature>
<feature type="transmembrane region" description="Helical" evidence="1">
    <location>
        <begin position="550"/>
        <end position="570"/>
    </location>
</feature>
<feature type="transmembrane region" description="Helical" evidence="1">
    <location>
        <begin position="587"/>
        <end position="607"/>
    </location>
</feature>
<feature type="transmembrane region" description="Helical" evidence="1">
    <location>
        <begin position="619"/>
        <end position="639"/>
    </location>
</feature>
<feature type="region of interest" description="Disordered" evidence="2">
    <location>
        <begin position="146"/>
        <end position="185"/>
    </location>
</feature>
<feature type="compositionally biased region" description="Low complexity" evidence="2">
    <location>
        <begin position="146"/>
        <end position="173"/>
    </location>
</feature>
<feature type="compositionally biased region" description="Acidic residues" evidence="2">
    <location>
        <begin position="174"/>
        <end position="183"/>
    </location>
</feature>
<accession>Q7YTA6</accession>
<accession>Q54GG2</accession>
<evidence type="ECO:0000255" key="1"/>
<evidence type="ECO:0000256" key="2">
    <source>
        <dbReference type="SAM" id="MobiDB-lite"/>
    </source>
</evidence>
<evidence type="ECO:0000305" key="3"/>
<reference key="1">
    <citation type="journal article" date="2003" name="Mol. Biol. Cell">
        <title>Synergistic control of cellular adhesion by transmembrane 9 proteins.</title>
        <authorList>
            <person name="Benghezal M."/>
            <person name="Cornillon S."/>
            <person name="Gebbie L."/>
            <person name="Alibaud L."/>
            <person name="Bruckert F."/>
            <person name="Letourneur F."/>
            <person name="Cosson P."/>
        </authorList>
    </citation>
    <scope>NUCLEOTIDE SEQUENCE [MRNA]</scope>
</reference>
<reference key="2">
    <citation type="journal article" date="2005" name="Nature">
        <title>The genome of the social amoeba Dictyostelium discoideum.</title>
        <authorList>
            <person name="Eichinger L."/>
            <person name="Pachebat J.A."/>
            <person name="Gloeckner G."/>
            <person name="Rajandream M.A."/>
            <person name="Sucgang R."/>
            <person name="Berriman M."/>
            <person name="Song J."/>
            <person name="Olsen R."/>
            <person name="Szafranski K."/>
            <person name="Xu Q."/>
            <person name="Tunggal B."/>
            <person name="Kummerfeld S."/>
            <person name="Madera M."/>
            <person name="Konfortov B.A."/>
            <person name="Rivero F."/>
            <person name="Bankier A.T."/>
            <person name="Lehmann R."/>
            <person name="Hamlin N."/>
            <person name="Davies R."/>
            <person name="Gaudet P."/>
            <person name="Fey P."/>
            <person name="Pilcher K."/>
            <person name="Chen G."/>
            <person name="Saunders D."/>
            <person name="Sodergren E.J."/>
            <person name="Davis P."/>
            <person name="Kerhornou A."/>
            <person name="Nie X."/>
            <person name="Hall N."/>
            <person name="Anjard C."/>
            <person name="Hemphill L."/>
            <person name="Bason N."/>
            <person name="Farbrother P."/>
            <person name="Desany B."/>
            <person name="Just E."/>
            <person name="Morio T."/>
            <person name="Rost R."/>
            <person name="Churcher C.M."/>
            <person name="Cooper J."/>
            <person name="Haydock S."/>
            <person name="van Driessche N."/>
            <person name="Cronin A."/>
            <person name="Goodhead I."/>
            <person name="Muzny D.M."/>
            <person name="Mourier T."/>
            <person name="Pain A."/>
            <person name="Lu M."/>
            <person name="Harper D."/>
            <person name="Lindsay R."/>
            <person name="Hauser H."/>
            <person name="James K.D."/>
            <person name="Quiles M."/>
            <person name="Madan Babu M."/>
            <person name="Saito T."/>
            <person name="Buchrieser C."/>
            <person name="Wardroper A."/>
            <person name="Felder M."/>
            <person name="Thangavelu M."/>
            <person name="Johnson D."/>
            <person name="Knights A."/>
            <person name="Loulseged H."/>
            <person name="Mungall K.L."/>
            <person name="Oliver K."/>
            <person name="Price C."/>
            <person name="Quail M.A."/>
            <person name="Urushihara H."/>
            <person name="Hernandez J."/>
            <person name="Rabbinowitsch E."/>
            <person name="Steffen D."/>
            <person name="Sanders M."/>
            <person name="Ma J."/>
            <person name="Kohara Y."/>
            <person name="Sharp S."/>
            <person name="Simmonds M.N."/>
            <person name="Spiegler S."/>
            <person name="Tivey A."/>
            <person name="Sugano S."/>
            <person name="White B."/>
            <person name="Walker D."/>
            <person name="Woodward J.R."/>
            <person name="Winckler T."/>
            <person name="Tanaka Y."/>
            <person name="Shaulsky G."/>
            <person name="Schleicher M."/>
            <person name="Weinstock G.M."/>
            <person name="Rosenthal A."/>
            <person name="Cox E.C."/>
            <person name="Chisholm R.L."/>
            <person name="Gibbs R.A."/>
            <person name="Loomis W.F."/>
            <person name="Platzer M."/>
            <person name="Kay R.R."/>
            <person name="Williams J.G."/>
            <person name="Dear P.H."/>
            <person name="Noegel A.A."/>
            <person name="Barrell B.G."/>
            <person name="Kuspa A."/>
        </authorList>
    </citation>
    <scope>NUCLEOTIDE SEQUENCE [LARGE SCALE GENOMIC DNA]</scope>
    <source>
        <strain>AX4</strain>
    </source>
</reference>
<keyword id="KW-0472">Membrane</keyword>
<keyword id="KW-0675">Receptor</keyword>
<keyword id="KW-1185">Reference proteome</keyword>
<keyword id="KW-0732">Signal</keyword>
<keyword id="KW-0812">Transmembrane</keyword>
<keyword id="KW-1133">Transmembrane helix</keyword>